<accession>Q479I3</accession>
<organism>
    <name type="scientific">Dechloromonas aromatica (strain RCB)</name>
    <dbReference type="NCBI Taxonomy" id="159087"/>
    <lineage>
        <taxon>Bacteria</taxon>
        <taxon>Pseudomonadati</taxon>
        <taxon>Pseudomonadota</taxon>
        <taxon>Betaproteobacteria</taxon>
        <taxon>Rhodocyclales</taxon>
        <taxon>Azonexaceae</taxon>
        <taxon>Dechloromonas</taxon>
    </lineage>
</organism>
<reference key="1">
    <citation type="journal article" date="2009" name="BMC Genomics">
        <title>Metabolic analysis of the soil microbe Dechloromonas aromatica str. RCB: indications of a surprisingly complex life-style and cryptic anaerobic pathways for aromatic degradation.</title>
        <authorList>
            <person name="Salinero K.K."/>
            <person name="Keller K."/>
            <person name="Feil W.S."/>
            <person name="Feil H."/>
            <person name="Trong S."/>
            <person name="Di Bartolo G."/>
            <person name="Lapidus A."/>
        </authorList>
    </citation>
    <scope>NUCLEOTIDE SEQUENCE [LARGE SCALE GENOMIC DNA]</scope>
    <source>
        <strain>RCB</strain>
    </source>
</reference>
<keyword id="KW-0030">Aminoacyl-tRNA synthetase</keyword>
<keyword id="KW-0067">ATP-binding</keyword>
<keyword id="KW-0436">Ligase</keyword>
<keyword id="KW-0479">Metal-binding</keyword>
<keyword id="KW-0547">Nucleotide-binding</keyword>
<keyword id="KW-0862">Zinc</keyword>
<gene>
    <name evidence="1" type="primary">gluQ</name>
    <name type="ordered locus">Daro_3769</name>
</gene>
<dbReference type="EC" id="6.1.1.-" evidence="1"/>
<dbReference type="EMBL" id="CP000089">
    <property type="protein sequence ID" value="AAZ48498.1"/>
    <property type="molecule type" value="Genomic_DNA"/>
</dbReference>
<dbReference type="SMR" id="Q479I3"/>
<dbReference type="STRING" id="159087.Daro_3769"/>
<dbReference type="KEGG" id="dar:Daro_3769"/>
<dbReference type="eggNOG" id="COG0008">
    <property type="taxonomic scope" value="Bacteria"/>
</dbReference>
<dbReference type="HOGENOM" id="CLU_015768_0_1_4"/>
<dbReference type="OrthoDB" id="9807503at2"/>
<dbReference type="GO" id="GO:0005829">
    <property type="term" value="C:cytosol"/>
    <property type="evidence" value="ECO:0007669"/>
    <property type="project" value="TreeGrafter"/>
</dbReference>
<dbReference type="GO" id="GO:0005524">
    <property type="term" value="F:ATP binding"/>
    <property type="evidence" value="ECO:0007669"/>
    <property type="project" value="UniProtKB-KW"/>
</dbReference>
<dbReference type="GO" id="GO:0004818">
    <property type="term" value="F:glutamate-tRNA ligase activity"/>
    <property type="evidence" value="ECO:0007669"/>
    <property type="project" value="TreeGrafter"/>
</dbReference>
<dbReference type="GO" id="GO:0008270">
    <property type="term" value="F:zinc ion binding"/>
    <property type="evidence" value="ECO:0007669"/>
    <property type="project" value="UniProtKB-UniRule"/>
</dbReference>
<dbReference type="GO" id="GO:0006424">
    <property type="term" value="P:glutamyl-tRNA aminoacylation"/>
    <property type="evidence" value="ECO:0007669"/>
    <property type="project" value="InterPro"/>
</dbReference>
<dbReference type="GO" id="GO:0006400">
    <property type="term" value="P:tRNA modification"/>
    <property type="evidence" value="ECO:0007669"/>
    <property type="project" value="InterPro"/>
</dbReference>
<dbReference type="FunFam" id="3.40.50.620:FF:000093">
    <property type="entry name" value="Glutamyl-Q tRNA(Asp) synthetase"/>
    <property type="match status" value="1"/>
</dbReference>
<dbReference type="Gene3D" id="3.40.50.620">
    <property type="entry name" value="HUPs"/>
    <property type="match status" value="1"/>
</dbReference>
<dbReference type="HAMAP" id="MF_01428">
    <property type="entry name" value="Glu_Q_tRNA_synth"/>
    <property type="match status" value="1"/>
</dbReference>
<dbReference type="InterPro" id="IPR022380">
    <property type="entry name" value="Glu-Q_tRNA(Asp)_Synthase"/>
</dbReference>
<dbReference type="InterPro" id="IPR000924">
    <property type="entry name" value="Glu/Gln-tRNA-synth"/>
</dbReference>
<dbReference type="InterPro" id="IPR020058">
    <property type="entry name" value="Glu/Gln-tRNA-synth_Ib_cat-dom"/>
</dbReference>
<dbReference type="InterPro" id="IPR049940">
    <property type="entry name" value="GluQ/Sye"/>
</dbReference>
<dbReference type="InterPro" id="IPR014729">
    <property type="entry name" value="Rossmann-like_a/b/a_fold"/>
</dbReference>
<dbReference type="NCBIfam" id="NF004313">
    <property type="entry name" value="PRK05710.1-2"/>
    <property type="match status" value="1"/>
</dbReference>
<dbReference type="NCBIfam" id="NF004314">
    <property type="entry name" value="PRK05710.1-3"/>
    <property type="match status" value="1"/>
</dbReference>
<dbReference type="NCBIfam" id="TIGR03838">
    <property type="entry name" value="queuosine_YadB"/>
    <property type="match status" value="1"/>
</dbReference>
<dbReference type="PANTHER" id="PTHR43311">
    <property type="entry name" value="GLUTAMATE--TRNA LIGASE"/>
    <property type="match status" value="1"/>
</dbReference>
<dbReference type="PANTHER" id="PTHR43311:SF1">
    <property type="entry name" value="GLUTAMYL-Q TRNA(ASP) SYNTHETASE"/>
    <property type="match status" value="1"/>
</dbReference>
<dbReference type="Pfam" id="PF00749">
    <property type="entry name" value="tRNA-synt_1c"/>
    <property type="match status" value="1"/>
</dbReference>
<dbReference type="PRINTS" id="PR00987">
    <property type="entry name" value="TRNASYNTHGLU"/>
</dbReference>
<dbReference type="SUPFAM" id="SSF52374">
    <property type="entry name" value="Nucleotidylyl transferase"/>
    <property type="match status" value="1"/>
</dbReference>
<evidence type="ECO:0000255" key="1">
    <source>
        <dbReference type="HAMAP-Rule" id="MF_01428"/>
    </source>
</evidence>
<protein>
    <recommendedName>
        <fullName evidence="1">Glutamyl-Q tRNA(Asp) synthetase</fullName>
        <shortName evidence="1">Glu-Q-RSs</shortName>
        <ecNumber evidence="1">6.1.1.-</ecNumber>
    </recommendedName>
</protein>
<sequence length="301" mass="32648">MNSPYRGRFAPSPTGPLHFGSLVAAVGSYLDARTQGGEWLVRMEDVDTPRNVPGAADDILRTLDAFGFEWDGPVLYQSKRFEAYAEALDRLKQAGLLYGCACSRKEIADSATHAAIDGGLAYPGTCRGGLPAGRQARAWRLRVDAGETAFIDRLQGRVAQHLEHDVGDFVLRRADGLFAYQLAVVVDDAWQGINAVVRGADLLASTPRQIWLQRCLGYLELTYAHLPVAANPAGEKLSKQTRAQALSVDRAAAELVRALRFLGQGVPEALARGAAADVWAWAGEHWTFDAVPRQSLILLPA</sequence>
<proteinExistence type="inferred from homology"/>
<comment type="function">
    <text evidence="1">Catalyzes the tRNA-independent activation of glutamate in presence of ATP and the subsequent transfer of glutamate onto a tRNA(Asp). Glutamate is transferred on the 2-amino-5-(4,5-dihydroxy-2-cyclopenten-1-yl) moiety of the queuosine in the wobble position of the QUC anticodon.</text>
</comment>
<comment type="cofactor">
    <cofactor evidence="1">
        <name>Zn(2+)</name>
        <dbReference type="ChEBI" id="CHEBI:29105"/>
    </cofactor>
    <text evidence="1">Binds 1 zinc ion per subunit.</text>
</comment>
<comment type="similarity">
    <text evidence="1">Belongs to the class-I aminoacyl-tRNA synthetase family. GluQ subfamily.</text>
</comment>
<name>GLUQ_DECAR</name>
<feature type="chain" id="PRO_1000024353" description="Glutamyl-Q tRNA(Asp) synthetase">
    <location>
        <begin position="1"/>
        <end position="301"/>
    </location>
</feature>
<feature type="short sequence motif" description="'HIGH' region">
    <location>
        <begin position="11"/>
        <end position="21"/>
    </location>
</feature>
<feature type="short sequence motif" description="'KMSKS' region">
    <location>
        <begin position="236"/>
        <end position="240"/>
    </location>
</feature>
<feature type="binding site" evidence="1">
    <location>
        <begin position="8"/>
        <end position="12"/>
    </location>
    <ligand>
        <name>L-glutamate</name>
        <dbReference type="ChEBI" id="CHEBI:29985"/>
    </ligand>
</feature>
<feature type="binding site" evidence="1">
    <location>
        <position position="44"/>
    </location>
    <ligand>
        <name>L-glutamate</name>
        <dbReference type="ChEBI" id="CHEBI:29985"/>
    </ligand>
</feature>
<feature type="binding site" evidence="1">
    <location>
        <position position="100"/>
    </location>
    <ligand>
        <name>Zn(2+)</name>
        <dbReference type="ChEBI" id="CHEBI:29105"/>
    </ligand>
</feature>
<feature type="binding site" evidence="1">
    <location>
        <position position="102"/>
    </location>
    <ligand>
        <name>Zn(2+)</name>
        <dbReference type="ChEBI" id="CHEBI:29105"/>
    </ligand>
</feature>
<feature type="binding site" evidence="1">
    <location>
        <position position="122"/>
    </location>
    <ligand>
        <name>Zn(2+)</name>
        <dbReference type="ChEBI" id="CHEBI:29105"/>
    </ligand>
</feature>
<feature type="binding site" evidence="1">
    <location>
        <position position="126"/>
    </location>
    <ligand>
        <name>Zn(2+)</name>
        <dbReference type="ChEBI" id="CHEBI:29105"/>
    </ligand>
</feature>
<feature type="binding site" evidence="1">
    <location>
        <position position="180"/>
    </location>
    <ligand>
        <name>L-glutamate</name>
        <dbReference type="ChEBI" id="CHEBI:29985"/>
    </ligand>
</feature>
<feature type="binding site" evidence="1">
    <location>
        <position position="198"/>
    </location>
    <ligand>
        <name>L-glutamate</name>
        <dbReference type="ChEBI" id="CHEBI:29985"/>
    </ligand>
</feature>
<feature type="binding site" evidence="1">
    <location>
        <position position="239"/>
    </location>
    <ligand>
        <name>ATP</name>
        <dbReference type="ChEBI" id="CHEBI:30616"/>
    </ligand>
</feature>